<accession>P57294</accession>
<reference key="1">
    <citation type="journal article" date="2000" name="Nature">
        <title>Genome sequence of the endocellular bacterial symbiont of aphids Buchnera sp. APS.</title>
        <authorList>
            <person name="Shigenobu S."/>
            <person name="Watanabe H."/>
            <person name="Hattori M."/>
            <person name="Sakaki Y."/>
            <person name="Ishikawa H."/>
        </authorList>
    </citation>
    <scope>NUCLEOTIDE SEQUENCE [LARGE SCALE GENOMIC DNA]</scope>
    <source>
        <strain>APS</strain>
    </source>
</reference>
<evidence type="ECO:0000255" key="1">
    <source>
        <dbReference type="HAMAP-Rule" id="MF_00926"/>
    </source>
</evidence>
<name>DKSA_BUCAI</name>
<dbReference type="EMBL" id="BA000003">
    <property type="protein sequence ID" value="BAB12915.1"/>
    <property type="molecule type" value="Genomic_DNA"/>
</dbReference>
<dbReference type="RefSeq" id="NP_240029.1">
    <property type="nucleotide sequence ID" value="NC_002528.1"/>
</dbReference>
<dbReference type="RefSeq" id="WP_010895996.1">
    <property type="nucleotide sequence ID" value="NC_002528.1"/>
</dbReference>
<dbReference type="SMR" id="P57294"/>
<dbReference type="STRING" id="563178.BUAP5A_195"/>
<dbReference type="EnsemblBacteria" id="BAB12915">
    <property type="protein sequence ID" value="BAB12915"/>
    <property type="gene ID" value="BAB12915"/>
</dbReference>
<dbReference type="KEGG" id="buc:BU198"/>
<dbReference type="PATRIC" id="fig|107806.10.peg.209"/>
<dbReference type="eggNOG" id="COG1734">
    <property type="taxonomic scope" value="Bacteria"/>
</dbReference>
<dbReference type="HOGENOM" id="CLU_043144_2_0_6"/>
<dbReference type="Proteomes" id="UP000001806">
    <property type="component" value="Chromosome"/>
</dbReference>
<dbReference type="GO" id="GO:0005737">
    <property type="term" value="C:cytoplasm"/>
    <property type="evidence" value="ECO:0007669"/>
    <property type="project" value="UniProtKB-SubCell"/>
</dbReference>
<dbReference type="GO" id="GO:0008270">
    <property type="term" value="F:zinc ion binding"/>
    <property type="evidence" value="ECO:0007669"/>
    <property type="project" value="UniProtKB-UniRule"/>
</dbReference>
<dbReference type="GO" id="GO:0010468">
    <property type="term" value="P:regulation of gene expression"/>
    <property type="evidence" value="ECO:0007669"/>
    <property type="project" value="UniProtKB-UniRule"/>
</dbReference>
<dbReference type="Gene3D" id="1.20.120.910">
    <property type="entry name" value="DksA, coiled-coil domain"/>
    <property type="match status" value="1"/>
</dbReference>
<dbReference type="HAMAP" id="MF_00926">
    <property type="entry name" value="DksA"/>
    <property type="match status" value="1"/>
</dbReference>
<dbReference type="InterPro" id="IPR048489">
    <property type="entry name" value="DksA_N"/>
</dbReference>
<dbReference type="InterPro" id="IPR012784">
    <property type="entry name" value="DksA_RNA_pol-bd"/>
</dbReference>
<dbReference type="InterPro" id="IPR037187">
    <property type="entry name" value="DnaK_N"/>
</dbReference>
<dbReference type="InterPro" id="IPR000962">
    <property type="entry name" value="Znf_DskA_TraR"/>
</dbReference>
<dbReference type="InterPro" id="IPR020458">
    <property type="entry name" value="Znf_DskA_TraR_CS"/>
</dbReference>
<dbReference type="NCBIfam" id="TIGR02420">
    <property type="entry name" value="dksA"/>
    <property type="match status" value="1"/>
</dbReference>
<dbReference type="PANTHER" id="PTHR33823:SF2">
    <property type="entry name" value="RNA POLYMERASE-BINDING TRANSCRIPTION FACTOR DKSA"/>
    <property type="match status" value="1"/>
</dbReference>
<dbReference type="PANTHER" id="PTHR33823">
    <property type="entry name" value="RNA POLYMERASE-BINDING TRANSCRIPTION FACTOR DKSA-RELATED"/>
    <property type="match status" value="1"/>
</dbReference>
<dbReference type="Pfam" id="PF21157">
    <property type="entry name" value="DksA_N"/>
    <property type="match status" value="1"/>
</dbReference>
<dbReference type="Pfam" id="PF01258">
    <property type="entry name" value="zf-dskA_traR"/>
    <property type="match status" value="1"/>
</dbReference>
<dbReference type="SUPFAM" id="SSF109635">
    <property type="entry name" value="DnaK suppressor protein DksA, alpha-hairpin domain"/>
    <property type="match status" value="1"/>
</dbReference>
<dbReference type="SUPFAM" id="SSF57716">
    <property type="entry name" value="Glucocorticoid receptor-like (DNA-binding domain)"/>
    <property type="match status" value="1"/>
</dbReference>
<dbReference type="PROSITE" id="PS01102">
    <property type="entry name" value="ZF_DKSA_1"/>
    <property type="match status" value="1"/>
</dbReference>
<dbReference type="PROSITE" id="PS51128">
    <property type="entry name" value="ZF_DKSA_2"/>
    <property type="match status" value="1"/>
</dbReference>
<organism>
    <name type="scientific">Buchnera aphidicola subsp. Acyrthosiphon pisum (strain APS)</name>
    <name type="common">Acyrthosiphon pisum symbiotic bacterium</name>
    <dbReference type="NCBI Taxonomy" id="107806"/>
    <lineage>
        <taxon>Bacteria</taxon>
        <taxon>Pseudomonadati</taxon>
        <taxon>Pseudomonadota</taxon>
        <taxon>Gammaproteobacteria</taxon>
        <taxon>Enterobacterales</taxon>
        <taxon>Erwiniaceae</taxon>
        <taxon>Buchnera</taxon>
    </lineage>
</organism>
<keyword id="KW-0963">Cytoplasm</keyword>
<keyword id="KW-0479">Metal-binding</keyword>
<keyword id="KW-1185">Reference proteome</keyword>
<keyword id="KW-0862">Zinc</keyword>
<keyword id="KW-0863">Zinc-finger</keyword>
<protein>
    <recommendedName>
        <fullName evidence="1">RNA polymerase-binding transcription factor DksA</fullName>
    </recommendedName>
</protein>
<sequence length="151" mass="17799">MEKEKNKKTSSLNVLSIAGLQPYQKKIDEEYMNKDQILHFYKILETWKTQLQDEINHTLLYIQDNATNFPDPIDRATQEEEFSLDLRNRDRSRKLIKKIEITLKKIKEKDFGYCNSCSVEIGIRRLEARPTADLCIDCKTLAEIREKQMTG</sequence>
<comment type="function">
    <text evidence="1">Transcription factor that acts by binding directly to the RNA polymerase (RNAP). Required for negative regulation of rRNA expression and positive regulation of several amino acid biosynthesis promoters. Also required for regulation of fis expression.</text>
</comment>
<comment type="subunit">
    <text evidence="1">Interacts directly with the RNA polymerase.</text>
</comment>
<comment type="subcellular location">
    <subcellularLocation>
        <location evidence="1">Cytoplasm</location>
    </subcellularLocation>
</comment>
<comment type="similarity">
    <text evidence="1">Belongs to the DksA family.</text>
</comment>
<feature type="chain" id="PRO_0000187542" description="RNA polymerase-binding transcription factor DksA">
    <location>
        <begin position="1"/>
        <end position="151"/>
    </location>
</feature>
<feature type="zinc finger region" description="dksA C4-type" evidence="1">
    <location>
        <begin position="114"/>
        <end position="138"/>
    </location>
</feature>
<feature type="binding site" evidence="1">
    <location>
        <position position="114"/>
    </location>
    <ligand>
        <name>Zn(2+)</name>
        <dbReference type="ChEBI" id="CHEBI:29105"/>
    </ligand>
</feature>
<feature type="binding site" evidence="1">
    <location>
        <position position="117"/>
    </location>
    <ligand>
        <name>Zn(2+)</name>
        <dbReference type="ChEBI" id="CHEBI:29105"/>
    </ligand>
</feature>
<feature type="binding site" evidence="1">
    <location>
        <position position="135"/>
    </location>
    <ligand>
        <name>Zn(2+)</name>
        <dbReference type="ChEBI" id="CHEBI:29105"/>
    </ligand>
</feature>
<feature type="binding site" evidence="1">
    <location>
        <position position="138"/>
    </location>
    <ligand>
        <name>Zn(2+)</name>
        <dbReference type="ChEBI" id="CHEBI:29105"/>
    </ligand>
</feature>
<gene>
    <name evidence="1" type="primary">dksA</name>
    <name type="ordered locus">BU198</name>
</gene>
<proteinExistence type="inferred from homology"/>